<organism>
    <name type="scientific">Mus musculus</name>
    <name type="common">Mouse</name>
    <dbReference type="NCBI Taxonomy" id="10090"/>
    <lineage>
        <taxon>Eukaryota</taxon>
        <taxon>Metazoa</taxon>
        <taxon>Chordata</taxon>
        <taxon>Craniata</taxon>
        <taxon>Vertebrata</taxon>
        <taxon>Euteleostomi</taxon>
        <taxon>Mammalia</taxon>
        <taxon>Eutheria</taxon>
        <taxon>Euarchontoglires</taxon>
        <taxon>Glires</taxon>
        <taxon>Rodentia</taxon>
        <taxon>Myomorpha</taxon>
        <taxon>Muroidea</taxon>
        <taxon>Muridae</taxon>
        <taxon>Murinae</taxon>
        <taxon>Mus</taxon>
        <taxon>Mus</taxon>
    </lineage>
</organism>
<accession>Q80ZW2</accession>
<keyword id="KW-0325">Glycoprotein</keyword>
<keyword id="KW-0597">Phosphoprotein</keyword>
<keyword id="KW-1185">Reference proteome</keyword>
<keyword id="KW-0964">Secreted</keyword>
<keyword id="KW-0732">Signal</keyword>
<protein>
    <recommendedName>
        <fullName>Protein THEM6</fullName>
    </recommendedName>
</protein>
<gene>
    <name type="primary">Them6</name>
</gene>
<proteinExistence type="evidence at protein level"/>
<dbReference type="EMBL" id="BC047266">
    <property type="protein sequence ID" value="AAH47266.1"/>
    <property type="molecule type" value="mRNA"/>
</dbReference>
<dbReference type="CCDS" id="CCDS27527.1"/>
<dbReference type="RefSeq" id="NP_941009.1">
    <property type="nucleotide sequence ID" value="NM_198607.1"/>
</dbReference>
<dbReference type="SMR" id="Q80ZW2"/>
<dbReference type="BioGRID" id="230161">
    <property type="interactions" value="9"/>
</dbReference>
<dbReference type="FunCoup" id="Q80ZW2">
    <property type="interactions" value="12"/>
</dbReference>
<dbReference type="IntAct" id="Q80ZW2">
    <property type="interactions" value="7"/>
</dbReference>
<dbReference type="STRING" id="10090.ENSMUSP00000069692"/>
<dbReference type="GlyCosmos" id="Q80ZW2">
    <property type="glycosylation" value="1 site, No reported glycans"/>
</dbReference>
<dbReference type="GlyGen" id="Q80ZW2">
    <property type="glycosylation" value="2 sites, 1 O-linked glycan (1 site)"/>
</dbReference>
<dbReference type="iPTMnet" id="Q80ZW2"/>
<dbReference type="PhosphoSitePlus" id="Q80ZW2"/>
<dbReference type="SwissPalm" id="Q80ZW2"/>
<dbReference type="jPOST" id="Q80ZW2"/>
<dbReference type="PaxDb" id="10090-ENSMUSP00000069692"/>
<dbReference type="PeptideAtlas" id="Q80ZW2"/>
<dbReference type="ProteomicsDB" id="262775"/>
<dbReference type="Pumba" id="Q80ZW2"/>
<dbReference type="Antibodypedia" id="14531">
    <property type="antibodies" value="91 antibodies from 15 providers"/>
</dbReference>
<dbReference type="Ensembl" id="ENSMUST00000070923.3">
    <property type="protein sequence ID" value="ENSMUSP00000069692.2"/>
    <property type="gene ID" value="ENSMUSG00000056665.3"/>
</dbReference>
<dbReference type="GeneID" id="223626"/>
<dbReference type="KEGG" id="mmu:223626"/>
<dbReference type="UCSC" id="uc007wfs.1">
    <property type="organism name" value="mouse"/>
</dbReference>
<dbReference type="AGR" id="MGI:1925301"/>
<dbReference type="CTD" id="51337"/>
<dbReference type="MGI" id="MGI:1925301">
    <property type="gene designation" value="Them6"/>
</dbReference>
<dbReference type="VEuPathDB" id="HostDB:ENSMUSG00000056665"/>
<dbReference type="eggNOG" id="KOG4366">
    <property type="taxonomic scope" value="Eukaryota"/>
</dbReference>
<dbReference type="GeneTree" id="ENSGT00390000004859"/>
<dbReference type="HOGENOM" id="CLU_091107_0_1_1"/>
<dbReference type="InParanoid" id="Q80ZW2"/>
<dbReference type="OMA" id="RDIDMCH"/>
<dbReference type="OrthoDB" id="265761at2759"/>
<dbReference type="PhylomeDB" id="Q80ZW2"/>
<dbReference type="TreeFam" id="TF324625"/>
<dbReference type="BioGRID-ORCS" id="223626">
    <property type="hits" value="3 hits in 76 CRISPR screens"/>
</dbReference>
<dbReference type="PRO" id="PR:Q80ZW2"/>
<dbReference type="Proteomes" id="UP000000589">
    <property type="component" value="Chromosome 15"/>
</dbReference>
<dbReference type="RNAct" id="Q80ZW2">
    <property type="molecule type" value="protein"/>
</dbReference>
<dbReference type="Bgee" id="ENSMUSG00000056665">
    <property type="expression patterns" value="Expressed in interventricular septum and 76 other cell types or tissues"/>
</dbReference>
<dbReference type="GO" id="GO:0005576">
    <property type="term" value="C:extracellular region"/>
    <property type="evidence" value="ECO:0007669"/>
    <property type="project" value="UniProtKB-SubCell"/>
</dbReference>
<dbReference type="CDD" id="cd00586">
    <property type="entry name" value="4HBT"/>
    <property type="match status" value="1"/>
</dbReference>
<dbReference type="Gene3D" id="3.10.129.10">
    <property type="entry name" value="Hotdog Thioesterase"/>
    <property type="match status" value="1"/>
</dbReference>
<dbReference type="InterPro" id="IPR029069">
    <property type="entry name" value="HotDog_dom_sf"/>
</dbReference>
<dbReference type="InterPro" id="IPR051490">
    <property type="entry name" value="THEM6_lcsJ_thioesterase"/>
</dbReference>
<dbReference type="PANTHER" id="PTHR12475">
    <property type="match status" value="1"/>
</dbReference>
<dbReference type="PANTHER" id="PTHR12475:SF4">
    <property type="entry name" value="PROTEIN THEM6"/>
    <property type="match status" value="1"/>
</dbReference>
<dbReference type="Pfam" id="PF13279">
    <property type="entry name" value="4HBT_2"/>
    <property type="match status" value="1"/>
</dbReference>
<dbReference type="SUPFAM" id="SSF54637">
    <property type="entry name" value="Thioesterase/thiol ester dehydrase-isomerase"/>
    <property type="match status" value="1"/>
</dbReference>
<feature type="signal peptide" evidence="2">
    <location>
        <begin position="1"/>
        <end position="21"/>
    </location>
</feature>
<feature type="chain" id="PRO_0000285637" description="Protein THEM6">
    <location>
        <begin position="22"/>
        <end position="207"/>
    </location>
</feature>
<feature type="modified residue" description="Phosphoserine" evidence="1">
    <location>
        <position position="199"/>
    </location>
</feature>
<feature type="glycosylation site" description="N-linked (GlcNAc...) asparagine" evidence="2">
    <location>
        <position position="188"/>
    </location>
</feature>
<sequence length="207" mass="23803">MLELLVASLSLALAFFALLDGWYLVRVPCAVLRARLLQPRVRDLLAEQRYAGRVLPSDLDLLLHMNNARYLREADVARAAHLTRCGVLGALRDLNAHTVLAASCARYRRSLRLFEPFEVHTRLQGWDDRAFYLEARFVSLRDGFVCALLRFRQHVLGTSPDRVVQHLCKRRVEPPELPEDLKHWISYNETSSQLLRAESGLSDRKDQ</sequence>
<name>THEM6_MOUSE</name>
<evidence type="ECO:0000250" key="1">
    <source>
        <dbReference type="UniProtKB" id="Q8WUY1"/>
    </source>
</evidence>
<evidence type="ECO:0000255" key="2"/>
<evidence type="ECO:0000305" key="3"/>
<reference key="1">
    <citation type="journal article" date="2004" name="Genome Res.">
        <title>The status, quality, and expansion of the NIH full-length cDNA project: the Mammalian Gene Collection (MGC).</title>
        <authorList>
            <consortium name="The MGC Project Team"/>
        </authorList>
    </citation>
    <scope>NUCLEOTIDE SEQUENCE [LARGE SCALE MRNA]</scope>
    <source>
        <tissue>Olfactory epithelium</tissue>
    </source>
</reference>
<reference key="2">
    <citation type="journal article" date="2010" name="Cell">
        <title>A tissue-specific atlas of mouse protein phosphorylation and expression.</title>
        <authorList>
            <person name="Huttlin E.L."/>
            <person name="Jedrychowski M.P."/>
            <person name="Elias J.E."/>
            <person name="Goswami T."/>
            <person name="Rad R."/>
            <person name="Beausoleil S.A."/>
            <person name="Villen J."/>
            <person name="Haas W."/>
            <person name="Sowa M.E."/>
            <person name="Gygi S.P."/>
        </authorList>
    </citation>
    <scope>IDENTIFICATION BY MASS SPECTROMETRY [LARGE SCALE ANALYSIS]</scope>
    <source>
        <tissue>Brain</tissue>
        <tissue>Heart</tissue>
        <tissue>Kidney</tissue>
        <tissue>Lung</tissue>
        <tissue>Spleen</tissue>
    </source>
</reference>
<comment type="subcellular location">
    <subcellularLocation>
        <location evidence="3">Secreted</location>
    </subcellularLocation>
</comment>
<comment type="similarity">
    <text evidence="3">Belongs to the THEM6 family.</text>
</comment>